<organism>
    <name type="scientific">Brucella suis (strain ATCC 23445 / NCTC 10510)</name>
    <dbReference type="NCBI Taxonomy" id="470137"/>
    <lineage>
        <taxon>Bacteria</taxon>
        <taxon>Pseudomonadati</taxon>
        <taxon>Pseudomonadota</taxon>
        <taxon>Alphaproteobacteria</taxon>
        <taxon>Hyphomicrobiales</taxon>
        <taxon>Brucellaceae</taxon>
        <taxon>Brucella/Ochrobactrum group</taxon>
        <taxon>Brucella</taxon>
    </lineage>
</organism>
<comment type="function">
    <text evidence="1">Catalyzes the formation of phosphatidylethanolamine (PtdEtn) from phosphatidylserine (PtdSer).</text>
</comment>
<comment type="catalytic activity">
    <reaction evidence="1">
        <text>a 1,2-diacyl-sn-glycero-3-phospho-L-serine + H(+) = a 1,2-diacyl-sn-glycero-3-phosphoethanolamine + CO2</text>
        <dbReference type="Rhea" id="RHEA:20828"/>
        <dbReference type="ChEBI" id="CHEBI:15378"/>
        <dbReference type="ChEBI" id="CHEBI:16526"/>
        <dbReference type="ChEBI" id="CHEBI:57262"/>
        <dbReference type="ChEBI" id="CHEBI:64612"/>
        <dbReference type="EC" id="4.1.1.65"/>
    </reaction>
</comment>
<comment type="cofactor">
    <cofactor evidence="1">
        <name>pyruvate</name>
        <dbReference type="ChEBI" id="CHEBI:15361"/>
    </cofactor>
    <text evidence="1">Binds 1 pyruvoyl group covalently per subunit.</text>
</comment>
<comment type="pathway">
    <text evidence="1">Phospholipid metabolism; phosphatidylethanolamine biosynthesis; phosphatidylethanolamine from CDP-diacylglycerol: step 2/2.</text>
</comment>
<comment type="subunit">
    <text evidence="1">Heterodimer of a large membrane-associated beta subunit and a small pyruvoyl-containing alpha subunit.</text>
</comment>
<comment type="subcellular location">
    <subcellularLocation>
        <location evidence="1">Cell membrane</location>
        <topology evidence="1">Peripheral membrane protein</topology>
    </subcellularLocation>
</comment>
<comment type="PTM">
    <text evidence="1">Is synthesized initially as an inactive proenzyme. Formation of the active enzyme involves a self-maturation process in which the active site pyruvoyl group is generated from an internal serine residue via an autocatalytic post-translational modification. Two non-identical subunits are generated from the proenzyme in this reaction, and the pyruvate is formed at the N-terminus of the alpha chain, which is derived from the carboxyl end of the proenzyme. The post-translation cleavage follows an unusual pathway, termed non-hydrolytic serinolysis, in which the side chain hydroxyl group of the serine supplies its oxygen atom to form the C-terminus of the beta chain, while the remainder of the serine residue undergoes an oxidative deamination to produce ammonia and the pyruvoyl prosthetic group on the alpha chain.</text>
</comment>
<comment type="similarity">
    <text evidence="1">Belongs to the phosphatidylserine decarboxylase family. PSD-A subfamily.</text>
</comment>
<evidence type="ECO:0000255" key="1">
    <source>
        <dbReference type="HAMAP-Rule" id="MF_00664"/>
    </source>
</evidence>
<reference key="1">
    <citation type="submission" date="2007-12" db="EMBL/GenBank/DDBJ databases">
        <title>Brucella suis ATCC 23445 whole genome shotgun sequencing project.</title>
        <authorList>
            <person name="Setubal J.C."/>
            <person name="Bowns C."/>
            <person name="Boyle S."/>
            <person name="Crasta O.R."/>
            <person name="Czar M.J."/>
            <person name="Dharmanolla C."/>
            <person name="Gillespie J.J."/>
            <person name="Kenyon R.W."/>
            <person name="Lu J."/>
            <person name="Mane S."/>
            <person name="Mohapatra S."/>
            <person name="Nagrani S."/>
            <person name="Purkayastha A."/>
            <person name="Rajasimha H.K."/>
            <person name="Shallom J.M."/>
            <person name="Shallom S."/>
            <person name="Shukla M."/>
            <person name="Snyder E.E."/>
            <person name="Sobral B.W."/>
            <person name="Wattam A.R."/>
            <person name="Will R."/>
            <person name="Williams K."/>
            <person name="Yoo H."/>
            <person name="Bruce D."/>
            <person name="Detter C."/>
            <person name="Munk C."/>
            <person name="Brettin T.S."/>
        </authorList>
    </citation>
    <scope>NUCLEOTIDE SEQUENCE [LARGE SCALE GENOMIC DNA]</scope>
    <source>
        <strain>ATCC 23445 / NCTC 10510</strain>
    </source>
</reference>
<proteinExistence type="inferred from homology"/>
<dbReference type="EC" id="4.1.1.65" evidence="1"/>
<dbReference type="EMBL" id="CP000911">
    <property type="protein sequence ID" value="ABY37557.1"/>
    <property type="molecule type" value="Genomic_DNA"/>
</dbReference>
<dbReference type="KEGG" id="bmt:BSUIS_A0469"/>
<dbReference type="HOGENOM" id="CLU_072492_0_0_5"/>
<dbReference type="UniPathway" id="UPA00558">
    <property type="reaction ID" value="UER00616"/>
</dbReference>
<dbReference type="Proteomes" id="UP000008545">
    <property type="component" value="Chromosome I"/>
</dbReference>
<dbReference type="GO" id="GO:0005886">
    <property type="term" value="C:plasma membrane"/>
    <property type="evidence" value="ECO:0007669"/>
    <property type="project" value="UniProtKB-SubCell"/>
</dbReference>
<dbReference type="GO" id="GO:0004609">
    <property type="term" value="F:phosphatidylserine decarboxylase activity"/>
    <property type="evidence" value="ECO:0007669"/>
    <property type="project" value="UniProtKB-UniRule"/>
</dbReference>
<dbReference type="GO" id="GO:0006646">
    <property type="term" value="P:phosphatidylethanolamine biosynthetic process"/>
    <property type="evidence" value="ECO:0007669"/>
    <property type="project" value="UniProtKB-UniRule"/>
</dbReference>
<dbReference type="HAMAP" id="MF_00664">
    <property type="entry name" value="PS_decarb_PSD_A"/>
    <property type="match status" value="1"/>
</dbReference>
<dbReference type="InterPro" id="IPR003817">
    <property type="entry name" value="PS_Dcarbxylase"/>
</dbReference>
<dbReference type="InterPro" id="IPR033175">
    <property type="entry name" value="PSD-A"/>
</dbReference>
<dbReference type="NCBIfam" id="NF003677">
    <property type="entry name" value="PRK05305.1-1"/>
    <property type="match status" value="1"/>
</dbReference>
<dbReference type="NCBIfam" id="NF003678">
    <property type="entry name" value="PRK05305.1-2"/>
    <property type="match status" value="1"/>
</dbReference>
<dbReference type="NCBIfam" id="NF003679">
    <property type="entry name" value="PRK05305.1-3"/>
    <property type="match status" value="1"/>
</dbReference>
<dbReference type="NCBIfam" id="NF003685">
    <property type="entry name" value="PRK05305.2-5"/>
    <property type="match status" value="1"/>
</dbReference>
<dbReference type="PANTHER" id="PTHR35809">
    <property type="entry name" value="ARCHAETIDYLSERINE DECARBOXYLASE PROENZYME-RELATED"/>
    <property type="match status" value="1"/>
</dbReference>
<dbReference type="PANTHER" id="PTHR35809:SF1">
    <property type="entry name" value="ARCHAETIDYLSERINE DECARBOXYLASE PROENZYME-RELATED"/>
    <property type="match status" value="1"/>
</dbReference>
<dbReference type="Pfam" id="PF02666">
    <property type="entry name" value="PS_Dcarbxylase"/>
    <property type="match status" value="1"/>
</dbReference>
<keyword id="KW-1003">Cell membrane</keyword>
<keyword id="KW-0210">Decarboxylase</keyword>
<keyword id="KW-0444">Lipid biosynthesis</keyword>
<keyword id="KW-0443">Lipid metabolism</keyword>
<keyword id="KW-0456">Lyase</keyword>
<keyword id="KW-0472">Membrane</keyword>
<keyword id="KW-0594">Phospholipid biosynthesis</keyword>
<keyword id="KW-1208">Phospholipid metabolism</keyword>
<keyword id="KW-0670">Pyruvate</keyword>
<keyword id="KW-0865">Zymogen</keyword>
<accession>B0CKC7</accession>
<name>PSD_BRUSI</name>
<protein>
    <recommendedName>
        <fullName evidence="1">Phosphatidylserine decarboxylase proenzyme</fullName>
        <ecNumber evidence="1">4.1.1.65</ecNumber>
    </recommendedName>
    <component>
        <recommendedName>
            <fullName evidence="1">Phosphatidylserine decarboxylase alpha chain</fullName>
        </recommendedName>
    </component>
    <component>
        <recommendedName>
            <fullName evidence="1">Phosphatidylserine decarboxylase beta chain</fullName>
        </recommendedName>
    </component>
</protein>
<gene>
    <name evidence="1" type="primary">psd</name>
    <name type="ordered locus">BSUIS_A0469</name>
</gene>
<sequence length="232" mass="25794">MSLTDTIRNTFVPIHREGYPFIAGFFVVSLILGWLWDPLFWIGMVLTVWCIYFYRDPERVTPMDDDLVISPADGKVSFVGLAVPPAELDLGYEPMTRVSVFMNVFSVHINRSPVRGKIDKVVHRPGKFLNAELDKASTENERNSVLIESPHGKVGVVQIAGLVARRIVCWSNQDDELSVGERFGLIRFGSRVDVYLPSDATVRVAVGQTAIAGETVLADYGTERGEPVVRIA</sequence>
<feature type="chain" id="PRO_1000082918" description="Phosphatidylserine decarboxylase beta chain" evidence="1">
    <location>
        <begin position="1"/>
        <end position="189"/>
    </location>
</feature>
<feature type="chain" id="PRO_1000082919" description="Phosphatidylserine decarboxylase alpha chain" evidence="1">
    <location>
        <begin position="190"/>
        <end position="232"/>
    </location>
</feature>
<feature type="active site" description="Schiff-base intermediate with substrate; via pyruvic acid" evidence="1">
    <location>
        <position position="190"/>
    </location>
</feature>
<feature type="site" description="Cleavage (non-hydrolytic); by autocatalysis" evidence="1">
    <location>
        <begin position="189"/>
        <end position="190"/>
    </location>
</feature>
<feature type="modified residue" description="Pyruvic acid (Ser); by autocatalysis" evidence="1">
    <location>
        <position position="190"/>
    </location>
</feature>